<protein>
    <recommendedName>
        <fullName>RWD domain-containing protein 2B</fullName>
    </recommendedName>
</protein>
<dbReference type="EMBL" id="AF177771">
    <property type="protein sequence ID" value="AAF63681.1"/>
    <property type="molecule type" value="mRNA"/>
</dbReference>
<dbReference type="EMBL" id="AK084966">
    <property type="protein sequence ID" value="BAC39322.1"/>
    <property type="molecule type" value="mRNA"/>
</dbReference>
<dbReference type="EMBL" id="BC002143">
    <property type="protein sequence ID" value="AAH02143.1"/>
    <property type="molecule type" value="mRNA"/>
</dbReference>
<dbReference type="CCDS" id="CCDS37383.1"/>
<dbReference type="RefSeq" id="NP_058620.2">
    <property type="nucleotide sequence ID" value="NM_016924.2"/>
</dbReference>
<dbReference type="SMR" id="Q99M03"/>
<dbReference type="FunCoup" id="Q99M03">
    <property type="interactions" value="22"/>
</dbReference>
<dbReference type="STRING" id="10090.ENSMUSP00000049168"/>
<dbReference type="GlyGen" id="Q99M03">
    <property type="glycosylation" value="1 site"/>
</dbReference>
<dbReference type="iPTMnet" id="Q99M03"/>
<dbReference type="PhosphoSitePlus" id="Q99M03"/>
<dbReference type="jPOST" id="Q99M03"/>
<dbReference type="PaxDb" id="10090-ENSMUSP00000049168"/>
<dbReference type="ProteomicsDB" id="255427"/>
<dbReference type="Pumba" id="Q99M03"/>
<dbReference type="Antibodypedia" id="6351">
    <property type="antibodies" value="13 antibodies from 10 providers"/>
</dbReference>
<dbReference type="DNASU" id="53858"/>
<dbReference type="Ensembl" id="ENSMUST00000039101.12">
    <property type="protein sequence ID" value="ENSMUSP00000049168.6"/>
    <property type="gene ID" value="ENSMUSG00000041079.13"/>
</dbReference>
<dbReference type="GeneID" id="53858"/>
<dbReference type="KEGG" id="mmu:53858"/>
<dbReference type="UCSC" id="uc007zui.1">
    <property type="organism name" value="mouse"/>
</dbReference>
<dbReference type="AGR" id="MGI:1858215"/>
<dbReference type="CTD" id="10069"/>
<dbReference type="MGI" id="MGI:1858215">
    <property type="gene designation" value="Rwdd2b"/>
</dbReference>
<dbReference type="VEuPathDB" id="HostDB:ENSMUSG00000041079"/>
<dbReference type="eggNOG" id="ENOG502QR2G">
    <property type="taxonomic scope" value="Eukaryota"/>
</dbReference>
<dbReference type="GeneTree" id="ENSGT00390000007224"/>
<dbReference type="HOGENOM" id="CLU_046295_1_0_1"/>
<dbReference type="InParanoid" id="Q99M03"/>
<dbReference type="OMA" id="IDAYMSF"/>
<dbReference type="OrthoDB" id="432412at2759"/>
<dbReference type="PhylomeDB" id="Q99M03"/>
<dbReference type="TreeFam" id="TF324344"/>
<dbReference type="Reactome" id="R-MMU-3065678">
    <property type="pathway name" value="SUMO is transferred from E1 to E2 (UBE2I, UBC9)"/>
</dbReference>
<dbReference type="BioGRID-ORCS" id="53858">
    <property type="hits" value="2 hits in 76 CRISPR screens"/>
</dbReference>
<dbReference type="ChiTaRS" id="Rwdd2b">
    <property type="organism name" value="mouse"/>
</dbReference>
<dbReference type="PRO" id="PR:Q99M03"/>
<dbReference type="Proteomes" id="UP000000589">
    <property type="component" value="Chromosome 16"/>
</dbReference>
<dbReference type="RNAct" id="Q99M03">
    <property type="molecule type" value="protein"/>
</dbReference>
<dbReference type="Bgee" id="ENSMUSG00000041079">
    <property type="expression patterns" value="Expressed in ear vesicle and 247 other cell types or tissues"/>
</dbReference>
<dbReference type="CDD" id="cd23829">
    <property type="entry name" value="RWD_RWDD2"/>
    <property type="match status" value="1"/>
</dbReference>
<dbReference type="CDD" id="cd24163">
    <property type="entry name" value="RWDD2_C"/>
    <property type="match status" value="1"/>
</dbReference>
<dbReference type="Gene3D" id="3.10.110.10">
    <property type="entry name" value="Ubiquitin Conjugating Enzyme"/>
    <property type="match status" value="1"/>
</dbReference>
<dbReference type="InterPro" id="IPR017359">
    <property type="entry name" value="Phi-like"/>
</dbReference>
<dbReference type="InterPro" id="IPR010541">
    <property type="entry name" value="Prp3_C"/>
</dbReference>
<dbReference type="InterPro" id="IPR006575">
    <property type="entry name" value="RWD_dom"/>
</dbReference>
<dbReference type="InterPro" id="IPR016135">
    <property type="entry name" value="UBQ-conjugating_enzyme/RWD"/>
</dbReference>
<dbReference type="PANTHER" id="PTHR15955">
    <property type="entry name" value="RWD DOMAIN CONTAINING PROTEIN 2"/>
    <property type="match status" value="1"/>
</dbReference>
<dbReference type="PANTHER" id="PTHR15955:SF8">
    <property type="entry name" value="RWD DOMAIN-CONTAINING PROTEIN 2B-RELATED"/>
    <property type="match status" value="1"/>
</dbReference>
<dbReference type="Pfam" id="PF06544">
    <property type="entry name" value="Prp3_C"/>
    <property type="match status" value="1"/>
</dbReference>
<dbReference type="Pfam" id="PF05773">
    <property type="entry name" value="RWD"/>
    <property type="match status" value="1"/>
</dbReference>
<dbReference type="PIRSF" id="PIRSF038021">
    <property type="entry name" value="UCP038021_RWDD2"/>
    <property type="match status" value="1"/>
</dbReference>
<dbReference type="SMART" id="SM00591">
    <property type="entry name" value="RWD"/>
    <property type="match status" value="1"/>
</dbReference>
<dbReference type="SUPFAM" id="SSF54495">
    <property type="entry name" value="UBC-like"/>
    <property type="match status" value="1"/>
</dbReference>
<dbReference type="PROSITE" id="PS50908">
    <property type="entry name" value="RWD"/>
    <property type="match status" value="1"/>
</dbReference>
<evidence type="ECO:0000255" key="1">
    <source>
        <dbReference type="PROSITE-ProRule" id="PRU00179"/>
    </source>
</evidence>
<evidence type="ECO:0000305" key="2"/>
<keyword id="KW-1185">Reference proteome</keyword>
<organism>
    <name type="scientific">Mus musculus</name>
    <name type="common">Mouse</name>
    <dbReference type="NCBI Taxonomy" id="10090"/>
    <lineage>
        <taxon>Eukaryota</taxon>
        <taxon>Metazoa</taxon>
        <taxon>Chordata</taxon>
        <taxon>Craniata</taxon>
        <taxon>Vertebrata</taxon>
        <taxon>Euteleostomi</taxon>
        <taxon>Mammalia</taxon>
        <taxon>Eutheria</taxon>
        <taxon>Euarchontoglires</taxon>
        <taxon>Glires</taxon>
        <taxon>Rodentia</taxon>
        <taxon>Myomorpha</taxon>
        <taxon>Muroidea</taxon>
        <taxon>Muridae</taxon>
        <taxon>Murinae</taxon>
        <taxon>Mus</taxon>
        <taxon>Mus</taxon>
    </lineage>
</organism>
<proteinExistence type="evidence at transcript level"/>
<accession>Q99M03</accession>
<accession>Q9JLH4</accession>
<gene>
    <name type="primary">Rwdd2b</name>
    <name type="synonym">ORF5</name>
</gene>
<feature type="chain" id="PRO_0000079505" description="RWD domain-containing protein 2B">
    <location>
        <begin position="1"/>
        <end position="290"/>
    </location>
</feature>
<feature type="domain" description="RWD" evidence="1">
    <location>
        <begin position="12"/>
        <end position="136"/>
    </location>
</feature>
<feature type="sequence conflict" description="In Ref. 1; AAF63681." evidence="2" ref="1">
    <original>LAE</original>
    <variation>FGTR</variation>
    <location>
        <begin position="35"/>
        <end position="37"/>
    </location>
</feature>
<feature type="sequence conflict" description="In Ref. 1; AAF63681." evidence="2" ref="1">
    <original>K</original>
    <variation>E</variation>
    <location>
        <position position="220"/>
    </location>
</feature>
<name>RWD2B_MOUSE</name>
<sequence>MVEMEQAEAQLSELDLLASMFPSENELIVNDQLALAELKDCIEKRTMEGRSSQVYFTINVSLDLSEAAVVTFSLSCILPFKYPTVLPEITVRSVSLSRSQQTQLNTDLIAYLQKNCLGDVCILNATEWVKEHAFDYVNIEALPSPARQSTAQPEDLAFTRLWIYSHHIYNKCKRRNILEWAKELSLTGFSMPGKPGVVCVEGPQSACEEFWSRLRKLNWKRILIRHREDIPLDGTAGGMEGQRKFPILEEKAFSVHGARGNHMDFGQLYQFLNARGCGDVFQMFFGVEGQ</sequence>
<reference key="1">
    <citation type="journal article" date="2000" name="Genomics">
        <title>Characterization of a novel gene, C21orf6, mapping to a critical region of chromosome 21q22.1 involved in the monosomy 21 phenotype and of its murine ortholog, orf5.</title>
        <authorList>
            <person name="Orti R."/>
            <person name="Rachidi M."/>
            <person name="Vialard F."/>
            <person name="Toyama K."/>
            <person name="Lopes C."/>
            <person name="Taudien S."/>
            <person name="Rosenthal A."/>
            <person name="Yaspo M.-L."/>
            <person name="Sinet P.-M."/>
            <person name="Delabar J.-M."/>
        </authorList>
    </citation>
    <scope>NUCLEOTIDE SEQUENCE [MRNA]</scope>
    <source>
        <strain>C57BL/6J</strain>
    </source>
</reference>
<reference key="2">
    <citation type="journal article" date="2005" name="Science">
        <title>The transcriptional landscape of the mammalian genome.</title>
        <authorList>
            <person name="Carninci P."/>
            <person name="Kasukawa T."/>
            <person name="Katayama S."/>
            <person name="Gough J."/>
            <person name="Frith M.C."/>
            <person name="Maeda N."/>
            <person name="Oyama R."/>
            <person name="Ravasi T."/>
            <person name="Lenhard B."/>
            <person name="Wells C."/>
            <person name="Kodzius R."/>
            <person name="Shimokawa K."/>
            <person name="Bajic V.B."/>
            <person name="Brenner S.E."/>
            <person name="Batalov S."/>
            <person name="Forrest A.R."/>
            <person name="Zavolan M."/>
            <person name="Davis M.J."/>
            <person name="Wilming L.G."/>
            <person name="Aidinis V."/>
            <person name="Allen J.E."/>
            <person name="Ambesi-Impiombato A."/>
            <person name="Apweiler R."/>
            <person name="Aturaliya R.N."/>
            <person name="Bailey T.L."/>
            <person name="Bansal M."/>
            <person name="Baxter L."/>
            <person name="Beisel K.W."/>
            <person name="Bersano T."/>
            <person name="Bono H."/>
            <person name="Chalk A.M."/>
            <person name="Chiu K.P."/>
            <person name="Choudhary V."/>
            <person name="Christoffels A."/>
            <person name="Clutterbuck D.R."/>
            <person name="Crowe M.L."/>
            <person name="Dalla E."/>
            <person name="Dalrymple B.P."/>
            <person name="de Bono B."/>
            <person name="Della Gatta G."/>
            <person name="di Bernardo D."/>
            <person name="Down T."/>
            <person name="Engstrom P."/>
            <person name="Fagiolini M."/>
            <person name="Faulkner G."/>
            <person name="Fletcher C.F."/>
            <person name="Fukushima T."/>
            <person name="Furuno M."/>
            <person name="Futaki S."/>
            <person name="Gariboldi M."/>
            <person name="Georgii-Hemming P."/>
            <person name="Gingeras T.R."/>
            <person name="Gojobori T."/>
            <person name="Green R.E."/>
            <person name="Gustincich S."/>
            <person name="Harbers M."/>
            <person name="Hayashi Y."/>
            <person name="Hensch T.K."/>
            <person name="Hirokawa N."/>
            <person name="Hill D."/>
            <person name="Huminiecki L."/>
            <person name="Iacono M."/>
            <person name="Ikeo K."/>
            <person name="Iwama A."/>
            <person name="Ishikawa T."/>
            <person name="Jakt M."/>
            <person name="Kanapin A."/>
            <person name="Katoh M."/>
            <person name="Kawasawa Y."/>
            <person name="Kelso J."/>
            <person name="Kitamura H."/>
            <person name="Kitano H."/>
            <person name="Kollias G."/>
            <person name="Krishnan S.P."/>
            <person name="Kruger A."/>
            <person name="Kummerfeld S.K."/>
            <person name="Kurochkin I.V."/>
            <person name="Lareau L.F."/>
            <person name="Lazarevic D."/>
            <person name="Lipovich L."/>
            <person name="Liu J."/>
            <person name="Liuni S."/>
            <person name="McWilliam S."/>
            <person name="Madan Babu M."/>
            <person name="Madera M."/>
            <person name="Marchionni L."/>
            <person name="Matsuda H."/>
            <person name="Matsuzawa S."/>
            <person name="Miki H."/>
            <person name="Mignone F."/>
            <person name="Miyake S."/>
            <person name="Morris K."/>
            <person name="Mottagui-Tabar S."/>
            <person name="Mulder N."/>
            <person name="Nakano N."/>
            <person name="Nakauchi H."/>
            <person name="Ng P."/>
            <person name="Nilsson R."/>
            <person name="Nishiguchi S."/>
            <person name="Nishikawa S."/>
            <person name="Nori F."/>
            <person name="Ohara O."/>
            <person name="Okazaki Y."/>
            <person name="Orlando V."/>
            <person name="Pang K.C."/>
            <person name="Pavan W.J."/>
            <person name="Pavesi G."/>
            <person name="Pesole G."/>
            <person name="Petrovsky N."/>
            <person name="Piazza S."/>
            <person name="Reed J."/>
            <person name="Reid J.F."/>
            <person name="Ring B.Z."/>
            <person name="Ringwald M."/>
            <person name="Rost B."/>
            <person name="Ruan Y."/>
            <person name="Salzberg S.L."/>
            <person name="Sandelin A."/>
            <person name="Schneider C."/>
            <person name="Schoenbach C."/>
            <person name="Sekiguchi K."/>
            <person name="Semple C.A."/>
            <person name="Seno S."/>
            <person name="Sessa L."/>
            <person name="Sheng Y."/>
            <person name="Shibata Y."/>
            <person name="Shimada H."/>
            <person name="Shimada K."/>
            <person name="Silva D."/>
            <person name="Sinclair B."/>
            <person name="Sperling S."/>
            <person name="Stupka E."/>
            <person name="Sugiura K."/>
            <person name="Sultana R."/>
            <person name="Takenaka Y."/>
            <person name="Taki K."/>
            <person name="Tammoja K."/>
            <person name="Tan S.L."/>
            <person name="Tang S."/>
            <person name="Taylor M.S."/>
            <person name="Tegner J."/>
            <person name="Teichmann S.A."/>
            <person name="Ueda H.R."/>
            <person name="van Nimwegen E."/>
            <person name="Verardo R."/>
            <person name="Wei C.L."/>
            <person name="Yagi K."/>
            <person name="Yamanishi H."/>
            <person name="Zabarovsky E."/>
            <person name="Zhu S."/>
            <person name="Zimmer A."/>
            <person name="Hide W."/>
            <person name="Bult C."/>
            <person name="Grimmond S.M."/>
            <person name="Teasdale R.D."/>
            <person name="Liu E.T."/>
            <person name="Brusic V."/>
            <person name="Quackenbush J."/>
            <person name="Wahlestedt C."/>
            <person name="Mattick J.S."/>
            <person name="Hume D.A."/>
            <person name="Kai C."/>
            <person name="Sasaki D."/>
            <person name="Tomaru Y."/>
            <person name="Fukuda S."/>
            <person name="Kanamori-Katayama M."/>
            <person name="Suzuki M."/>
            <person name="Aoki J."/>
            <person name="Arakawa T."/>
            <person name="Iida J."/>
            <person name="Imamura K."/>
            <person name="Itoh M."/>
            <person name="Kato T."/>
            <person name="Kawaji H."/>
            <person name="Kawagashira N."/>
            <person name="Kawashima T."/>
            <person name="Kojima M."/>
            <person name="Kondo S."/>
            <person name="Konno H."/>
            <person name="Nakano K."/>
            <person name="Ninomiya N."/>
            <person name="Nishio T."/>
            <person name="Okada M."/>
            <person name="Plessy C."/>
            <person name="Shibata K."/>
            <person name="Shiraki T."/>
            <person name="Suzuki S."/>
            <person name="Tagami M."/>
            <person name="Waki K."/>
            <person name="Watahiki A."/>
            <person name="Okamura-Oho Y."/>
            <person name="Suzuki H."/>
            <person name="Kawai J."/>
            <person name="Hayashizaki Y."/>
        </authorList>
    </citation>
    <scope>NUCLEOTIDE SEQUENCE [LARGE SCALE MRNA]</scope>
    <source>
        <strain>C57BL/6J</strain>
        <tissue>Lung</tissue>
    </source>
</reference>
<reference key="3">
    <citation type="journal article" date="2004" name="Genome Res.">
        <title>The status, quality, and expansion of the NIH full-length cDNA project: the Mammalian Gene Collection (MGC).</title>
        <authorList>
            <consortium name="The MGC Project Team"/>
        </authorList>
    </citation>
    <scope>NUCLEOTIDE SEQUENCE [LARGE SCALE MRNA]</scope>
    <source>
        <strain>FVB/N</strain>
        <tissue>Mammary tumor</tissue>
    </source>
</reference>